<reference evidence="5" key="1">
    <citation type="journal article" date="2012" name="J. Biol. Chem.">
        <title>Identification and structural characterization of novel cyclotide with activity against an insect pest of sugar cane.</title>
        <authorList>
            <person name="Pinto M.F."/>
            <person name="Fensterseifer I.C."/>
            <person name="Migliolo L."/>
            <person name="Sousa D.A."/>
            <person name="de Capdville G."/>
            <person name="Arboleda-Valencia J.W."/>
            <person name="Colgrave M.L."/>
            <person name="Craik D.J."/>
            <person name="Magalhaes B.S."/>
            <person name="Dias S.C."/>
            <person name="Franco O.L."/>
        </authorList>
    </citation>
    <scope>PROTEIN SEQUENCE</scope>
    <scope>FUNCTION</scope>
    <scope>TISSUE SPECIFICITY</scope>
    <scope>CYCLIZATION</scope>
    <scope>MASS SPECTROMETRY</scope>
</reference>
<accession>B3EWF1</accession>
<sequence>GGSVPCGESCVFIPCITSLAGCSCKNKVCYYD</sequence>
<name>PABR1_PALRI</name>
<comment type="function">
    <text evidence="2 3">Probably participates in a plant defense mechanism. Reduces growth of and increases mortality in larvae of D.saccharalis. Kills cultured SF-9 cells of S.frugiperda probably by disrupting plasma membranes. Has hemolytic activity against human erythrocytes. Has no antibacterial activity against E.coli strain ATCC 8739 and S.aureus strain ATCC 25923.</text>
</comment>
<comment type="tissue specificity">
    <text evidence="3">Expressed in leaves, flowers, peduncles and seeds (at protein level).</text>
</comment>
<comment type="domain">
    <text evidence="1">The presence of a 'disulfide through disulfide knot' structurally defines this protein as a knottin.</text>
</comment>
<comment type="PTM">
    <text evidence="2 3">This is a cyclic peptide.</text>
</comment>
<comment type="mass spectrometry"/>
<comment type="similarity">
    <text evidence="2">Belongs to the cyclotide family. Bracelet subfamily.</text>
</comment>
<comment type="caution">
    <text evidence="5">This peptide is cyclic. The start position was chosen by similarity to OAK1 (kalata-B1) for which the DNA sequence is known.</text>
</comment>
<feature type="chain" id="PRO_0000415953" description="Parigidin-br1">
    <location>
        <begin position="1"/>
        <end position="32"/>
    </location>
</feature>
<feature type="disulfide bond" evidence="1 2">
    <location>
        <begin position="6"/>
        <end position="22"/>
    </location>
</feature>
<feature type="disulfide bond" evidence="1 2">
    <location>
        <begin position="10"/>
        <end position="24"/>
    </location>
</feature>
<feature type="disulfide bond" evidence="1 2">
    <location>
        <begin position="15"/>
        <end position="29"/>
    </location>
</feature>
<feature type="cross-link" description="Cyclopeptide (Gly-Asp)" evidence="5">
    <location>
        <begin position="1"/>
        <end position="32"/>
    </location>
</feature>
<dbReference type="SMR" id="B3EWF1"/>
<dbReference type="GO" id="GO:0006952">
    <property type="term" value="P:defense response"/>
    <property type="evidence" value="ECO:0007669"/>
    <property type="project" value="UniProtKB-KW"/>
</dbReference>
<dbReference type="InterPro" id="IPR005535">
    <property type="entry name" value="Cyclotide"/>
</dbReference>
<dbReference type="InterPro" id="IPR012323">
    <property type="entry name" value="Cyclotide_bracelet_CS"/>
</dbReference>
<dbReference type="InterPro" id="IPR036146">
    <property type="entry name" value="Cyclotide_sf"/>
</dbReference>
<dbReference type="Pfam" id="PF03784">
    <property type="entry name" value="Cyclotide"/>
    <property type="match status" value="1"/>
</dbReference>
<dbReference type="PIRSF" id="PIRSF037891">
    <property type="entry name" value="Cycloviolacin"/>
    <property type="match status" value="1"/>
</dbReference>
<dbReference type="SUPFAM" id="SSF57038">
    <property type="entry name" value="Cyclotides"/>
    <property type="match status" value="1"/>
</dbReference>
<dbReference type="PROSITE" id="PS51052">
    <property type="entry name" value="CYCLOTIDE"/>
    <property type="match status" value="1"/>
</dbReference>
<dbReference type="PROSITE" id="PS60008">
    <property type="entry name" value="CYCLOTIDE_BRACELET"/>
    <property type="match status" value="1"/>
</dbReference>
<evidence type="ECO:0000250" key="1">
    <source>
        <dbReference type="UniProtKB" id="P56879"/>
    </source>
</evidence>
<evidence type="ECO:0000255" key="2">
    <source>
        <dbReference type="PROSITE-ProRule" id="PRU00395"/>
    </source>
</evidence>
<evidence type="ECO:0000269" key="3">
    <source>
    </source>
</evidence>
<evidence type="ECO:0000303" key="4">
    <source>
    </source>
</evidence>
<evidence type="ECO:0000305" key="5"/>
<proteinExistence type="evidence at protein level"/>
<keyword id="KW-0903">Direct protein sequencing</keyword>
<keyword id="KW-1015">Disulfide bond</keyword>
<keyword id="KW-0960">Knottin</keyword>
<keyword id="KW-0611">Plant defense</keyword>
<protein>
    <recommendedName>
        <fullName evidence="4">Parigidin-br1</fullName>
    </recommendedName>
</protein>
<organism>
    <name type="scientific">Palicourea rigida</name>
    <dbReference type="NCBI Taxonomy" id="96266"/>
    <lineage>
        <taxon>Eukaryota</taxon>
        <taxon>Viridiplantae</taxon>
        <taxon>Streptophyta</taxon>
        <taxon>Embryophyta</taxon>
        <taxon>Tracheophyta</taxon>
        <taxon>Spermatophyta</taxon>
        <taxon>Magnoliopsida</taxon>
        <taxon>eudicotyledons</taxon>
        <taxon>Gunneridae</taxon>
        <taxon>Pentapetalae</taxon>
        <taxon>asterids</taxon>
        <taxon>lamiids</taxon>
        <taxon>Gentianales</taxon>
        <taxon>Rubiaceae</taxon>
        <taxon>Rubioideae</taxon>
        <taxon>Palicoureeae</taxon>
        <taxon>Palicourea</taxon>
    </lineage>
</organism>